<dbReference type="EC" id="6.3.2.8" evidence="1"/>
<dbReference type="EMBL" id="CP000655">
    <property type="protein sequence ID" value="ABP33389.1"/>
    <property type="molecule type" value="Genomic_DNA"/>
</dbReference>
<dbReference type="RefSeq" id="WP_011902014.1">
    <property type="nucleotide sequence ID" value="NC_009379.1"/>
</dbReference>
<dbReference type="SMR" id="A4SV75"/>
<dbReference type="GeneID" id="31480517"/>
<dbReference type="KEGG" id="pnu:Pnuc_0168"/>
<dbReference type="eggNOG" id="COG0773">
    <property type="taxonomic scope" value="Bacteria"/>
</dbReference>
<dbReference type="HOGENOM" id="CLU_028104_2_2_4"/>
<dbReference type="UniPathway" id="UPA00219"/>
<dbReference type="Proteomes" id="UP000000231">
    <property type="component" value="Chromosome"/>
</dbReference>
<dbReference type="GO" id="GO:0005737">
    <property type="term" value="C:cytoplasm"/>
    <property type="evidence" value="ECO:0007669"/>
    <property type="project" value="UniProtKB-SubCell"/>
</dbReference>
<dbReference type="GO" id="GO:0005524">
    <property type="term" value="F:ATP binding"/>
    <property type="evidence" value="ECO:0007669"/>
    <property type="project" value="UniProtKB-UniRule"/>
</dbReference>
<dbReference type="GO" id="GO:0008763">
    <property type="term" value="F:UDP-N-acetylmuramate-L-alanine ligase activity"/>
    <property type="evidence" value="ECO:0007669"/>
    <property type="project" value="UniProtKB-UniRule"/>
</dbReference>
<dbReference type="GO" id="GO:0051301">
    <property type="term" value="P:cell division"/>
    <property type="evidence" value="ECO:0007669"/>
    <property type="project" value="UniProtKB-KW"/>
</dbReference>
<dbReference type="GO" id="GO:0071555">
    <property type="term" value="P:cell wall organization"/>
    <property type="evidence" value="ECO:0007669"/>
    <property type="project" value="UniProtKB-KW"/>
</dbReference>
<dbReference type="GO" id="GO:0009252">
    <property type="term" value="P:peptidoglycan biosynthetic process"/>
    <property type="evidence" value="ECO:0007669"/>
    <property type="project" value="UniProtKB-UniRule"/>
</dbReference>
<dbReference type="GO" id="GO:0008360">
    <property type="term" value="P:regulation of cell shape"/>
    <property type="evidence" value="ECO:0007669"/>
    <property type="project" value="UniProtKB-KW"/>
</dbReference>
<dbReference type="Gene3D" id="3.90.190.20">
    <property type="entry name" value="Mur ligase, C-terminal domain"/>
    <property type="match status" value="1"/>
</dbReference>
<dbReference type="Gene3D" id="3.40.1190.10">
    <property type="entry name" value="Mur-like, catalytic domain"/>
    <property type="match status" value="1"/>
</dbReference>
<dbReference type="Gene3D" id="3.40.50.720">
    <property type="entry name" value="NAD(P)-binding Rossmann-like Domain"/>
    <property type="match status" value="1"/>
</dbReference>
<dbReference type="HAMAP" id="MF_00046">
    <property type="entry name" value="MurC"/>
    <property type="match status" value="1"/>
</dbReference>
<dbReference type="InterPro" id="IPR036565">
    <property type="entry name" value="Mur-like_cat_sf"/>
</dbReference>
<dbReference type="InterPro" id="IPR004101">
    <property type="entry name" value="Mur_ligase_C"/>
</dbReference>
<dbReference type="InterPro" id="IPR036615">
    <property type="entry name" value="Mur_ligase_C_dom_sf"/>
</dbReference>
<dbReference type="InterPro" id="IPR013221">
    <property type="entry name" value="Mur_ligase_cen"/>
</dbReference>
<dbReference type="InterPro" id="IPR000713">
    <property type="entry name" value="Mur_ligase_N"/>
</dbReference>
<dbReference type="InterPro" id="IPR050061">
    <property type="entry name" value="MurCDEF_pg_biosynth"/>
</dbReference>
<dbReference type="InterPro" id="IPR005758">
    <property type="entry name" value="UDP-N-AcMur_Ala_ligase_MurC"/>
</dbReference>
<dbReference type="NCBIfam" id="TIGR01082">
    <property type="entry name" value="murC"/>
    <property type="match status" value="1"/>
</dbReference>
<dbReference type="PANTHER" id="PTHR43445:SF3">
    <property type="entry name" value="UDP-N-ACETYLMURAMATE--L-ALANINE LIGASE"/>
    <property type="match status" value="1"/>
</dbReference>
<dbReference type="PANTHER" id="PTHR43445">
    <property type="entry name" value="UDP-N-ACETYLMURAMATE--L-ALANINE LIGASE-RELATED"/>
    <property type="match status" value="1"/>
</dbReference>
<dbReference type="Pfam" id="PF01225">
    <property type="entry name" value="Mur_ligase"/>
    <property type="match status" value="1"/>
</dbReference>
<dbReference type="Pfam" id="PF02875">
    <property type="entry name" value="Mur_ligase_C"/>
    <property type="match status" value="1"/>
</dbReference>
<dbReference type="Pfam" id="PF08245">
    <property type="entry name" value="Mur_ligase_M"/>
    <property type="match status" value="1"/>
</dbReference>
<dbReference type="SUPFAM" id="SSF51984">
    <property type="entry name" value="MurCD N-terminal domain"/>
    <property type="match status" value="1"/>
</dbReference>
<dbReference type="SUPFAM" id="SSF53623">
    <property type="entry name" value="MurD-like peptide ligases, catalytic domain"/>
    <property type="match status" value="1"/>
</dbReference>
<dbReference type="SUPFAM" id="SSF53244">
    <property type="entry name" value="MurD-like peptide ligases, peptide-binding domain"/>
    <property type="match status" value="1"/>
</dbReference>
<organism>
    <name type="scientific">Polynucleobacter asymbioticus (strain DSM 18221 / CIP 109841 / QLW-P1DMWA-1)</name>
    <name type="common">Polynucleobacter necessarius subsp. asymbioticus</name>
    <dbReference type="NCBI Taxonomy" id="312153"/>
    <lineage>
        <taxon>Bacteria</taxon>
        <taxon>Pseudomonadati</taxon>
        <taxon>Pseudomonadota</taxon>
        <taxon>Betaproteobacteria</taxon>
        <taxon>Burkholderiales</taxon>
        <taxon>Burkholderiaceae</taxon>
        <taxon>Polynucleobacter</taxon>
    </lineage>
</organism>
<proteinExistence type="inferred from homology"/>
<name>MURC_POLAQ</name>
<protein>
    <recommendedName>
        <fullName evidence="1">UDP-N-acetylmuramate--L-alanine ligase</fullName>
        <ecNumber evidence="1">6.3.2.8</ecNumber>
    </recommendedName>
    <alternativeName>
        <fullName evidence="1">UDP-N-acetylmuramoyl-L-alanine synthetase</fullName>
    </alternativeName>
</protein>
<comment type="function">
    <text evidence="1">Cell wall formation.</text>
</comment>
<comment type="catalytic activity">
    <reaction evidence="1">
        <text>UDP-N-acetyl-alpha-D-muramate + L-alanine + ATP = UDP-N-acetyl-alpha-D-muramoyl-L-alanine + ADP + phosphate + H(+)</text>
        <dbReference type="Rhea" id="RHEA:23372"/>
        <dbReference type="ChEBI" id="CHEBI:15378"/>
        <dbReference type="ChEBI" id="CHEBI:30616"/>
        <dbReference type="ChEBI" id="CHEBI:43474"/>
        <dbReference type="ChEBI" id="CHEBI:57972"/>
        <dbReference type="ChEBI" id="CHEBI:70757"/>
        <dbReference type="ChEBI" id="CHEBI:83898"/>
        <dbReference type="ChEBI" id="CHEBI:456216"/>
        <dbReference type="EC" id="6.3.2.8"/>
    </reaction>
</comment>
<comment type="pathway">
    <text evidence="1">Cell wall biogenesis; peptidoglycan biosynthesis.</text>
</comment>
<comment type="subcellular location">
    <subcellularLocation>
        <location evidence="1">Cytoplasm</location>
    </subcellularLocation>
</comment>
<comment type="similarity">
    <text evidence="1">Belongs to the MurCDEF family.</text>
</comment>
<gene>
    <name evidence="1" type="primary">murC</name>
    <name type="ordered locus">Pnuc_0168</name>
</gene>
<accession>A4SV75</accession>
<keyword id="KW-0067">ATP-binding</keyword>
<keyword id="KW-0131">Cell cycle</keyword>
<keyword id="KW-0132">Cell division</keyword>
<keyword id="KW-0133">Cell shape</keyword>
<keyword id="KW-0961">Cell wall biogenesis/degradation</keyword>
<keyword id="KW-0963">Cytoplasm</keyword>
<keyword id="KW-0436">Ligase</keyword>
<keyword id="KW-0547">Nucleotide-binding</keyword>
<keyword id="KW-0573">Peptidoglycan synthesis</keyword>
<keyword id="KW-1185">Reference proteome</keyword>
<reference key="1">
    <citation type="journal article" date="2012" name="Stand. Genomic Sci.">
        <title>Complete genome sequence of Polynucleobacter necessarius subsp. asymbioticus type strain (QLW-P1DMWA-1(T)).</title>
        <authorList>
            <person name="Meincke L."/>
            <person name="Copeland A."/>
            <person name="Lapidus A."/>
            <person name="Lucas S."/>
            <person name="Berry K.W."/>
            <person name="Del Rio T.G."/>
            <person name="Hammon N."/>
            <person name="Dalin E."/>
            <person name="Tice H."/>
            <person name="Pitluck S."/>
            <person name="Richardson P."/>
            <person name="Bruce D."/>
            <person name="Goodwin L."/>
            <person name="Han C."/>
            <person name="Tapia R."/>
            <person name="Detter J.C."/>
            <person name="Schmutz J."/>
            <person name="Brettin T."/>
            <person name="Larimer F."/>
            <person name="Land M."/>
            <person name="Hauser L."/>
            <person name="Kyrpides N.C."/>
            <person name="Ivanova N."/>
            <person name="Goker M."/>
            <person name="Woyke T."/>
            <person name="Wu Q.L."/>
            <person name="Pockl M."/>
            <person name="Hahn M.W."/>
            <person name="Klenk H.P."/>
        </authorList>
    </citation>
    <scope>NUCLEOTIDE SEQUENCE [LARGE SCALE GENOMIC DNA]</scope>
    <source>
        <strain>DSM 18221 / CIP 109841 / QLW-P1DMWA-1</strain>
    </source>
</reference>
<evidence type="ECO:0000255" key="1">
    <source>
        <dbReference type="HAMAP-Rule" id="MF_00046"/>
    </source>
</evidence>
<feature type="chain" id="PRO_1000074746" description="UDP-N-acetylmuramate--L-alanine ligase">
    <location>
        <begin position="1"/>
        <end position="478"/>
    </location>
</feature>
<feature type="binding site" evidence="1">
    <location>
        <begin position="112"/>
        <end position="118"/>
    </location>
    <ligand>
        <name>ATP</name>
        <dbReference type="ChEBI" id="CHEBI:30616"/>
    </ligand>
</feature>
<sequence length="478" mass="50937">MKHIVQQIHFIGIGGTGMSGIAEVLLNLGYQVSGSDLVEGAATKRLKELGAVIHIGHDPKNVGTAEAVVISTAVAGNNPEVLAARAAKIPVIQRAVMLGELMRLKQGIAIAGTHGKTTTTSLVASVLAEGDLDPTFVIGGKLNSAGANARLGRGDFIVVEADESDASFLQLFPAMEVVTNIDADHMDTYQHDMARLKQAFVQFIQRMPFYGVAVLCIDDANVRDIIPFVSQPILRYGLSEDADIRASNVRADGTRMHFTVERRTVRRHGNKPGPLNVTLNLPGLHNVRNALAAIGIATELGVGDQAIIKALSEFSGVGRRFQRYGDIPLASGGKFTLIDDYGHHPVEMAATLAAARGAYPDRRLVLAFQPHRFTRTRDCFGEFVQVLKNFDALVLTEVYPAGEAKIPGADGKSLMKAALVDDKTSKALLNSAAVAFASSVAEMPEKLGQVLKDGDVLITMGAGSISALPHTLSEAKHV</sequence>